<protein>
    <recommendedName>
        <fullName evidence="1">Large ribosomal subunit protein uL14</fullName>
    </recommendedName>
    <alternativeName>
        <fullName evidence="2">50S ribosomal protein L14</fullName>
    </alternativeName>
</protein>
<evidence type="ECO:0000255" key="1">
    <source>
        <dbReference type="HAMAP-Rule" id="MF_01367"/>
    </source>
</evidence>
<evidence type="ECO:0000305" key="2"/>
<sequence>MVSFMTRLNVADNTGAKQVGIIKVLGATYKRYAFLGDVVVVSVKDAIPNGMVKKGQVLRAVIVRTKKGQQRQDGTHLKFHDNACVLIKEDKSPRGTRIFGPVARELREKGYNKILSLAVEVV</sequence>
<accession>P47407</accession>
<proteinExistence type="inferred from homology"/>
<feature type="chain" id="PRO_0000128551" description="Large ribosomal subunit protein uL14">
    <location>
        <begin position="1"/>
        <end position="122"/>
    </location>
</feature>
<gene>
    <name evidence="1" type="primary">rplN</name>
    <name evidence="1" type="synonym">rpl14</name>
    <name type="ordered locus">MG161</name>
</gene>
<keyword id="KW-1185">Reference proteome</keyword>
<keyword id="KW-0687">Ribonucleoprotein</keyword>
<keyword id="KW-0689">Ribosomal protein</keyword>
<keyword id="KW-0694">RNA-binding</keyword>
<keyword id="KW-0699">rRNA-binding</keyword>
<organism>
    <name type="scientific">Mycoplasma genitalium (strain ATCC 33530 / DSM 19775 / NCTC 10195 / G37)</name>
    <name type="common">Mycoplasmoides genitalium</name>
    <dbReference type="NCBI Taxonomy" id="243273"/>
    <lineage>
        <taxon>Bacteria</taxon>
        <taxon>Bacillati</taxon>
        <taxon>Mycoplasmatota</taxon>
        <taxon>Mycoplasmoidales</taxon>
        <taxon>Mycoplasmoidaceae</taxon>
        <taxon>Mycoplasmoides</taxon>
    </lineage>
</organism>
<name>RL14_MYCGE</name>
<dbReference type="EMBL" id="L43967">
    <property type="protein sequence ID" value="AAC71379.1"/>
    <property type="molecule type" value="Genomic_DNA"/>
</dbReference>
<dbReference type="PIR" id="H64217">
    <property type="entry name" value="H64217"/>
</dbReference>
<dbReference type="RefSeq" id="WP_009885845.1">
    <property type="nucleotide sequence ID" value="NC_000908.2"/>
</dbReference>
<dbReference type="SMR" id="P47407"/>
<dbReference type="FunCoup" id="P47407">
    <property type="interactions" value="199"/>
</dbReference>
<dbReference type="STRING" id="243273.MG_161"/>
<dbReference type="GeneID" id="88282294"/>
<dbReference type="KEGG" id="mge:MG_161"/>
<dbReference type="eggNOG" id="COG0093">
    <property type="taxonomic scope" value="Bacteria"/>
</dbReference>
<dbReference type="HOGENOM" id="CLU_095071_2_1_14"/>
<dbReference type="InParanoid" id="P47407"/>
<dbReference type="OrthoDB" id="9806379at2"/>
<dbReference type="BioCyc" id="MGEN243273:G1GJ2-185-MONOMER"/>
<dbReference type="Proteomes" id="UP000000807">
    <property type="component" value="Chromosome"/>
</dbReference>
<dbReference type="GO" id="GO:0022625">
    <property type="term" value="C:cytosolic large ribosomal subunit"/>
    <property type="evidence" value="ECO:0000318"/>
    <property type="project" value="GO_Central"/>
</dbReference>
<dbReference type="GO" id="GO:0070180">
    <property type="term" value="F:large ribosomal subunit rRNA binding"/>
    <property type="evidence" value="ECO:0000318"/>
    <property type="project" value="GO_Central"/>
</dbReference>
<dbReference type="GO" id="GO:0003735">
    <property type="term" value="F:structural constituent of ribosome"/>
    <property type="evidence" value="ECO:0000318"/>
    <property type="project" value="GO_Central"/>
</dbReference>
<dbReference type="GO" id="GO:0006412">
    <property type="term" value="P:translation"/>
    <property type="evidence" value="ECO:0007669"/>
    <property type="project" value="UniProtKB-UniRule"/>
</dbReference>
<dbReference type="CDD" id="cd00337">
    <property type="entry name" value="Ribosomal_uL14"/>
    <property type="match status" value="1"/>
</dbReference>
<dbReference type="FunFam" id="2.40.150.20:FF:000005">
    <property type="entry name" value="50S ribosomal protein L14"/>
    <property type="match status" value="1"/>
</dbReference>
<dbReference type="Gene3D" id="2.40.150.20">
    <property type="entry name" value="Ribosomal protein L14"/>
    <property type="match status" value="1"/>
</dbReference>
<dbReference type="HAMAP" id="MF_01367">
    <property type="entry name" value="Ribosomal_uL14"/>
    <property type="match status" value="1"/>
</dbReference>
<dbReference type="InterPro" id="IPR000218">
    <property type="entry name" value="Ribosomal_uL14"/>
</dbReference>
<dbReference type="InterPro" id="IPR005745">
    <property type="entry name" value="Ribosomal_uL14_bac-type"/>
</dbReference>
<dbReference type="InterPro" id="IPR019972">
    <property type="entry name" value="Ribosomal_uL14_CS"/>
</dbReference>
<dbReference type="InterPro" id="IPR036853">
    <property type="entry name" value="Ribosomal_uL14_sf"/>
</dbReference>
<dbReference type="NCBIfam" id="TIGR01067">
    <property type="entry name" value="rplN_bact"/>
    <property type="match status" value="1"/>
</dbReference>
<dbReference type="PANTHER" id="PTHR11761">
    <property type="entry name" value="50S/60S RIBOSOMAL PROTEIN L14/L23"/>
    <property type="match status" value="1"/>
</dbReference>
<dbReference type="PANTHER" id="PTHR11761:SF3">
    <property type="entry name" value="LARGE RIBOSOMAL SUBUNIT PROTEIN UL14M"/>
    <property type="match status" value="1"/>
</dbReference>
<dbReference type="Pfam" id="PF00238">
    <property type="entry name" value="Ribosomal_L14"/>
    <property type="match status" value="1"/>
</dbReference>
<dbReference type="SMART" id="SM01374">
    <property type="entry name" value="Ribosomal_L14"/>
    <property type="match status" value="1"/>
</dbReference>
<dbReference type="SUPFAM" id="SSF50193">
    <property type="entry name" value="Ribosomal protein L14"/>
    <property type="match status" value="1"/>
</dbReference>
<dbReference type="PROSITE" id="PS00049">
    <property type="entry name" value="RIBOSOMAL_L14"/>
    <property type="match status" value="1"/>
</dbReference>
<comment type="function">
    <text evidence="1">Binds to 23S rRNA. Forms part of two intersubunit bridges in the 70S ribosome.</text>
</comment>
<comment type="subunit">
    <text evidence="1">Part of the 50S ribosomal subunit. Forms a cluster with proteins L3 and L19. In the 70S ribosome, L14 and L19 interact and together make contacts with the 16S rRNA in bridges B5 and B8.</text>
</comment>
<comment type="similarity">
    <text evidence="1">Belongs to the universal ribosomal protein uL14 family.</text>
</comment>
<reference key="1">
    <citation type="journal article" date="1995" name="Science">
        <title>The minimal gene complement of Mycoplasma genitalium.</title>
        <authorList>
            <person name="Fraser C.M."/>
            <person name="Gocayne J.D."/>
            <person name="White O."/>
            <person name="Adams M.D."/>
            <person name="Clayton R.A."/>
            <person name="Fleischmann R.D."/>
            <person name="Bult C.J."/>
            <person name="Kerlavage A.R."/>
            <person name="Sutton G.G."/>
            <person name="Kelley J.M."/>
            <person name="Fritchman J.L."/>
            <person name="Weidman J.F."/>
            <person name="Small K.V."/>
            <person name="Sandusky M."/>
            <person name="Fuhrmann J.L."/>
            <person name="Nguyen D.T."/>
            <person name="Utterback T.R."/>
            <person name="Saudek D.M."/>
            <person name="Phillips C.A."/>
            <person name="Merrick J.M."/>
            <person name="Tomb J.-F."/>
            <person name="Dougherty B.A."/>
            <person name="Bott K.F."/>
            <person name="Hu P.-C."/>
            <person name="Lucier T.S."/>
            <person name="Peterson S.N."/>
            <person name="Smith H.O."/>
            <person name="Hutchison C.A. III"/>
            <person name="Venter J.C."/>
        </authorList>
    </citation>
    <scope>NUCLEOTIDE SEQUENCE [LARGE SCALE GENOMIC DNA]</scope>
    <source>
        <strain>ATCC 33530 / DSM 19775 / NCTC 10195 / G37</strain>
    </source>
</reference>